<proteinExistence type="evidence at protein level"/>
<comment type="function">
    <text evidence="7 9 11 12 13">Component of the chaperonin-containing T-complex (TRiC), a molecular chaperone complex that assists the folding of actin, tubulin and other proteins upon ATP hydrolysis (PubMed:25467444, PubMed:36493755, PubMed:35449234, PubMed:37193829). The TRiC complex mediates the folding of WRAP53/TCAB1, thereby regulating telomere maintenance (PubMed:25467444). As part of the TRiC complex may play a role in the assembly of BBSome, a complex involved in ciliogenesis regulating transports vesicles to the cilia (PubMed:20080638).</text>
</comment>
<comment type="catalytic activity">
    <reaction evidence="8">
        <text>ATP + H2O = ADP + phosphate + H(+)</text>
        <dbReference type="Rhea" id="RHEA:13065"/>
        <dbReference type="ChEBI" id="CHEBI:15377"/>
        <dbReference type="ChEBI" id="CHEBI:15378"/>
        <dbReference type="ChEBI" id="CHEBI:30616"/>
        <dbReference type="ChEBI" id="CHEBI:43474"/>
        <dbReference type="ChEBI" id="CHEBI:456216"/>
    </reaction>
</comment>
<comment type="subunit">
    <text evidence="1 4 7 9 10 11 12 13">Component of the chaperonin-containing T-complex (TRiC), a hexadecamer composed of two identical back-to-back stacked rings enclosing a protein folding chamber (PubMed:20080638, PubMed:25467444, PubMed:36493755, PubMed:35449234, PubMed:37193829). Each ring is made up of eight different subunits: TCP1/CCT1, CCT2, CCT3, CCT4, CCT5, CCT6A/CCT6, CCT7, CCT8 (PubMed:36493755, PubMed:35449234, PubMed:37193829). Interacts with PACRG (PubMed:14532270). Interacts with DNAAF4 (By similarity). Interacts with DLEC1 (PubMed:33144677).</text>
</comment>
<comment type="interaction">
    <interactant intactId="EBI-356876">
        <id>P50991</id>
    </interactant>
    <interactant intactId="EBI-741406">
        <id>P51946</id>
        <label>CCNH</label>
    </interactant>
    <organismsDiffer>false</organismsDiffer>
    <experiments>3</experiments>
</comment>
<comment type="interaction">
    <interactant intactId="EBI-356876">
        <id>P50991</id>
    </interactant>
    <interactant intactId="EBI-357407">
        <id>P78371</id>
        <label>CCT2</label>
    </interactant>
    <organismsDiffer>false</organismsDiffer>
    <experiments>9</experiments>
</comment>
<comment type="interaction">
    <interactant intactId="EBI-356876">
        <id>P50991</id>
    </interactant>
    <interactant intactId="EBI-7151999">
        <id>P78380</id>
        <label>OLR1</label>
    </interactant>
    <organismsDiffer>false</organismsDiffer>
    <experiments>3</experiments>
</comment>
<comment type="interaction">
    <interactant intactId="EBI-356876">
        <id>P50991</id>
    </interactant>
    <interactant intactId="EBI-356553">
        <id>P17987</id>
        <label>TCP1</label>
    </interactant>
    <organismsDiffer>false</organismsDiffer>
    <experiments>3</experiments>
</comment>
<comment type="subcellular location">
    <subcellularLocation>
        <location evidence="6 7">Cytoplasm</location>
    </subcellularLocation>
    <subcellularLocation>
        <location evidence="6">Melanosome</location>
    </subcellularLocation>
    <subcellularLocation>
        <location evidence="5 7">Cytoplasm</location>
        <location evidence="5 7">Cytoskeleton</location>
        <location evidence="5 7">Microtubule organizing center</location>
        <location evidence="5 7">Centrosome</location>
    </subcellularLocation>
    <subcellularLocation>
        <location evidence="1">Cytoplasm</location>
        <location evidence="1">Cytoskeleton</location>
        <location evidence="1">Cilium basal body</location>
    </subcellularLocation>
    <text evidence="6">Identified by mass spectrometry in melanosome fractions from stage I to stage IV.</text>
</comment>
<comment type="alternative products">
    <event type="alternative splicing"/>
    <isoform>
        <id>P50991-1</id>
        <name>1</name>
        <sequence type="displayed"/>
    </isoform>
    <isoform>
        <id>P50991-2</id>
        <name>2</name>
        <sequence type="described" ref="VSP_045537"/>
    </isoform>
</comment>
<comment type="disease">
    <text evidence="14">De novo genetic variants in nearly every subunit of the TRiC complex, including CCT4, have been found in individuals with a broad spectrum of brain malformations, and clinical phenotypes ranging from mild to severe epilepsy, developmental delay, intellectual disability, ataxia, and other features of cerebral malfunction.</text>
</comment>
<comment type="similarity">
    <text evidence="16">Belongs to the TCP-1 chaperonin family.</text>
</comment>
<reference key="1">
    <citation type="journal article" date="1996" name="J. Biol. Chem.">
        <title>Identification of a group of cellular cofactors that stimulate the binding of RNA polymerase II and TRP-185 to human immunodeficiency virus 1 TAR RNA.</title>
        <authorList>
            <person name="Wu-Baer F."/>
            <person name="Lane W.S."/>
            <person name="Gaynor R.B."/>
        </authorList>
    </citation>
    <scope>NUCLEOTIDE SEQUENCE [MRNA] (ISOFORM 1)</scope>
    <scope>PARTIAL PROTEIN SEQUENCE</scope>
</reference>
<reference key="2">
    <citation type="journal article" date="1998" name="Mol. Cell. Biol.">
        <title>Maturation of human cyclin E requires the function of eukaryotic chaperonin CCT.</title>
        <authorList>
            <person name="Won K.-A."/>
            <person name="Schumacher R.J."/>
            <person name="Farr G.W."/>
            <person name="Horwich A.L."/>
            <person name="Reed S.I."/>
        </authorList>
    </citation>
    <scope>NUCLEOTIDE SEQUENCE [MRNA] (ISOFORM 1)</scope>
</reference>
<reference key="3">
    <citation type="journal article" date="2004" name="Nat. Genet.">
        <title>Complete sequencing and characterization of 21,243 full-length human cDNAs.</title>
        <authorList>
            <person name="Ota T."/>
            <person name="Suzuki Y."/>
            <person name="Nishikawa T."/>
            <person name="Otsuki T."/>
            <person name="Sugiyama T."/>
            <person name="Irie R."/>
            <person name="Wakamatsu A."/>
            <person name="Hayashi K."/>
            <person name="Sato H."/>
            <person name="Nagai K."/>
            <person name="Kimura K."/>
            <person name="Makita H."/>
            <person name="Sekine M."/>
            <person name="Obayashi M."/>
            <person name="Nishi T."/>
            <person name="Shibahara T."/>
            <person name="Tanaka T."/>
            <person name="Ishii S."/>
            <person name="Yamamoto J."/>
            <person name="Saito K."/>
            <person name="Kawai Y."/>
            <person name="Isono Y."/>
            <person name="Nakamura Y."/>
            <person name="Nagahari K."/>
            <person name="Murakami K."/>
            <person name="Yasuda T."/>
            <person name="Iwayanagi T."/>
            <person name="Wagatsuma M."/>
            <person name="Shiratori A."/>
            <person name="Sudo H."/>
            <person name="Hosoiri T."/>
            <person name="Kaku Y."/>
            <person name="Kodaira H."/>
            <person name="Kondo H."/>
            <person name="Sugawara M."/>
            <person name="Takahashi M."/>
            <person name="Kanda K."/>
            <person name="Yokoi T."/>
            <person name="Furuya T."/>
            <person name="Kikkawa E."/>
            <person name="Omura Y."/>
            <person name="Abe K."/>
            <person name="Kamihara K."/>
            <person name="Katsuta N."/>
            <person name="Sato K."/>
            <person name="Tanikawa M."/>
            <person name="Yamazaki M."/>
            <person name="Ninomiya K."/>
            <person name="Ishibashi T."/>
            <person name="Yamashita H."/>
            <person name="Murakawa K."/>
            <person name="Fujimori K."/>
            <person name="Tanai H."/>
            <person name="Kimata M."/>
            <person name="Watanabe M."/>
            <person name="Hiraoka S."/>
            <person name="Chiba Y."/>
            <person name="Ishida S."/>
            <person name="Ono Y."/>
            <person name="Takiguchi S."/>
            <person name="Watanabe S."/>
            <person name="Yosida M."/>
            <person name="Hotuta T."/>
            <person name="Kusano J."/>
            <person name="Kanehori K."/>
            <person name="Takahashi-Fujii A."/>
            <person name="Hara H."/>
            <person name="Tanase T.-O."/>
            <person name="Nomura Y."/>
            <person name="Togiya S."/>
            <person name="Komai F."/>
            <person name="Hara R."/>
            <person name="Takeuchi K."/>
            <person name="Arita M."/>
            <person name="Imose N."/>
            <person name="Musashino K."/>
            <person name="Yuuki H."/>
            <person name="Oshima A."/>
            <person name="Sasaki N."/>
            <person name="Aotsuka S."/>
            <person name="Yoshikawa Y."/>
            <person name="Matsunawa H."/>
            <person name="Ichihara T."/>
            <person name="Shiohata N."/>
            <person name="Sano S."/>
            <person name="Moriya S."/>
            <person name="Momiyama H."/>
            <person name="Satoh N."/>
            <person name="Takami S."/>
            <person name="Terashima Y."/>
            <person name="Suzuki O."/>
            <person name="Nakagawa S."/>
            <person name="Senoh A."/>
            <person name="Mizoguchi H."/>
            <person name="Goto Y."/>
            <person name="Shimizu F."/>
            <person name="Wakebe H."/>
            <person name="Hishigaki H."/>
            <person name="Watanabe T."/>
            <person name="Sugiyama A."/>
            <person name="Takemoto M."/>
            <person name="Kawakami B."/>
            <person name="Yamazaki M."/>
            <person name="Watanabe K."/>
            <person name="Kumagai A."/>
            <person name="Itakura S."/>
            <person name="Fukuzumi Y."/>
            <person name="Fujimori Y."/>
            <person name="Komiyama M."/>
            <person name="Tashiro H."/>
            <person name="Tanigami A."/>
            <person name="Fujiwara T."/>
            <person name="Ono T."/>
            <person name="Yamada K."/>
            <person name="Fujii Y."/>
            <person name="Ozaki K."/>
            <person name="Hirao M."/>
            <person name="Ohmori Y."/>
            <person name="Kawabata A."/>
            <person name="Hikiji T."/>
            <person name="Kobatake N."/>
            <person name="Inagaki H."/>
            <person name="Ikema Y."/>
            <person name="Okamoto S."/>
            <person name="Okitani R."/>
            <person name="Kawakami T."/>
            <person name="Noguchi S."/>
            <person name="Itoh T."/>
            <person name="Shigeta K."/>
            <person name="Senba T."/>
            <person name="Matsumura K."/>
            <person name="Nakajima Y."/>
            <person name="Mizuno T."/>
            <person name="Morinaga M."/>
            <person name="Sasaki M."/>
            <person name="Togashi T."/>
            <person name="Oyama M."/>
            <person name="Hata H."/>
            <person name="Watanabe M."/>
            <person name="Komatsu T."/>
            <person name="Mizushima-Sugano J."/>
            <person name="Satoh T."/>
            <person name="Shirai Y."/>
            <person name="Takahashi Y."/>
            <person name="Nakagawa K."/>
            <person name="Okumura K."/>
            <person name="Nagase T."/>
            <person name="Nomura N."/>
            <person name="Kikuchi H."/>
            <person name="Masuho Y."/>
            <person name="Yamashita R."/>
            <person name="Nakai K."/>
            <person name="Yada T."/>
            <person name="Nakamura Y."/>
            <person name="Ohara O."/>
            <person name="Isogai T."/>
            <person name="Sugano S."/>
        </authorList>
    </citation>
    <scope>NUCLEOTIDE SEQUENCE [LARGE SCALE MRNA] (ISOFORMS 1 AND 2)</scope>
    <source>
        <tissue>Brain</tissue>
        <tissue>Thymus</tissue>
    </source>
</reference>
<reference key="4">
    <citation type="journal article" date="2005" name="Nature">
        <title>Generation and annotation of the DNA sequences of human chromosomes 2 and 4.</title>
        <authorList>
            <person name="Hillier L.W."/>
            <person name="Graves T.A."/>
            <person name="Fulton R.S."/>
            <person name="Fulton L.A."/>
            <person name="Pepin K.H."/>
            <person name="Minx P."/>
            <person name="Wagner-McPherson C."/>
            <person name="Layman D."/>
            <person name="Wylie K."/>
            <person name="Sekhon M."/>
            <person name="Becker M.C."/>
            <person name="Fewell G.A."/>
            <person name="Delehaunty K.D."/>
            <person name="Miner T.L."/>
            <person name="Nash W.E."/>
            <person name="Kremitzki C."/>
            <person name="Oddy L."/>
            <person name="Du H."/>
            <person name="Sun H."/>
            <person name="Bradshaw-Cordum H."/>
            <person name="Ali J."/>
            <person name="Carter J."/>
            <person name="Cordes M."/>
            <person name="Harris A."/>
            <person name="Isak A."/>
            <person name="van Brunt A."/>
            <person name="Nguyen C."/>
            <person name="Du F."/>
            <person name="Courtney L."/>
            <person name="Kalicki J."/>
            <person name="Ozersky P."/>
            <person name="Abbott S."/>
            <person name="Armstrong J."/>
            <person name="Belter E.A."/>
            <person name="Caruso L."/>
            <person name="Cedroni M."/>
            <person name="Cotton M."/>
            <person name="Davidson T."/>
            <person name="Desai A."/>
            <person name="Elliott G."/>
            <person name="Erb T."/>
            <person name="Fronick C."/>
            <person name="Gaige T."/>
            <person name="Haakenson W."/>
            <person name="Haglund K."/>
            <person name="Holmes A."/>
            <person name="Harkins R."/>
            <person name="Kim K."/>
            <person name="Kruchowski S.S."/>
            <person name="Strong C.M."/>
            <person name="Grewal N."/>
            <person name="Goyea E."/>
            <person name="Hou S."/>
            <person name="Levy A."/>
            <person name="Martinka S."/>
            <person name="Mead K."/>
            <person name="McLellan M.D."/>
            <person name="Meyer R."/>
            <person name="Randall-Maher J."/>
            <person name="Tomlinson C."/>
            <person name="Dauphin-Kohlberg S."/>
            <person name="Kozlowicz-Reilly A."/>
            <person name="Shah N."/>
            <person name="Swearengen-Shahid S."/>
            <person name="Snider J."/>
            <person name="Strong J.T."/>
            <person name="Thompson J."/>
            <person name="Yoakum M."/>
            <person name="Leonard S."/>
            <person name="Pearman C."/>
            <person name="Trani L."/>
            <person name="Radionenko M."/>
            <person name="Waligorski J.E."/>
            <person name="Wang C."/>
            <person name="Rock S.M."/>
            <person name="Tin-Wollam A.-M."/>
            <person name="Maupin R."/>
            <person name="Latreille P."/>
            <person name="Wendl M.C."/>
            <person name="Yang S.-P."/>
            <person name="Pohl C."/>
            <person name="Wallis J.W."/>
            <person name="Spieth J."/>
            <person name="Bieri T.A."/>
            <person name="Berkowicz N."/>
            <person name="Nelson J.O."/>
            <person name="Osborne J."/>
            <person name="Ding L."/>
            <person name="Meyer R."/>
            <person name="Sabo A."/>
            <person name="Shotland Y."/>
            <person name="Sinha P."/>
            <person name="Wohldmann P.E."/>
            <person name="Cook L.L."/>
            <person name="Hickenbotham M.T."/>
            <person name="Eldred J."/>
            <person name="Williams D."/>
            <person name="Jones T.A."/>
            <person name="She X."/>
            <person name="Ciccarelli F.D."/>
            <person name="Izaurralde E."/>
            <person name="Taylor J."/>
            <person name="Schmutz J."/>
            <person name="Myers R.M."/>
            <person name="Cox D.R."/>
            <person name="Huang X."/>
            <person name="McPherson J.D."/>
            <person name="Mardis E.R."/>
            <person name="Clifton S.W."/>
            <person name="Warren W.C."/>
            <person name="Chinwalla A.T."/>
            <person name="Eddy S.R."/>
            <person name="Marra M.A."/>
            <person name="Ovcharenko I."/>
            <person name="Furey T.S."/>
            <person name="Miller W."/>
            <person name="Eichler E.E."/>
            <person name="Bork P."/>
            <person name="Suyama M."/>
            <person name="Torrents D."/>
            <person name="Waterston R.H."/>
            <person name="Wilson R.K."/>
        </authorList>
    </citation>
    <scope>NUCLEOTIDE SEQUENCE [LARGE SCALE GENOMIC DNA]</scope>
</reference>
<reference key="5">
    <citation type="journal article" date="2004" name="Genome Res.">
        <title>The status, quality, and expansion of the NIH full-length cDNA project: the Mammalian Gene Collection (MGC).</title>
        <authorList>
            <consortium name="The MGC Project Team"/>
        </authorList>
    </citation>
    <scope>NUCLEOTIDE SEQUENCE [LARGE SCALE MRNA] (ISOFORM 1)</scope>
    <source>
        <tissue>Brain</tissue>
    </source>
</reference>
<reference key="6">
    <citation type="journal article" date="2003" name="Nat. Biotechnol.">
        <title>Exploring proteomes and analyzing protein processing by mass spectrometric identification of sorted N-terminal peptides.</title>
        <authorList>
            <person name="Gevaert K."/>
            <person name="Goethals M."/>
            <person name="Martens L."/>
            <person name="Van Damme J."/>
            <person name="Staes A."/>
            <person name="Thomas G.R."/>
            <person name="Vandekerckhove J."/>
        </authorList>
    </citation>
    <scope>PROTEIN SEQUENCE OF 2-8</scope>
    <source>
        <tissue>Platelet</tissue>
    </source>
</reference>
<reference key="7">
    <citation type="submission" date="2004-03" db="UniProtKB">
        <authorList>
            <person name="Bienvenut W.V."/>
            <person name="Barblan J."/>
            <person name="Quadroni M."/>
        </authorList>
    </citation>
    <scope>PROTEIN SEQUENCE OF 420-435</scope>
    <scope>IDENTIFICATION BY MASS SPECTROMETRY</scope>
    <source>
        <tissue>B-cell lymphoma</tissue>
    </source>
</reference>
<reference key="8">
    <citation type="journal article" date="2003" name="J. Biol. Chem.">
        <title>A product of the human gene adjacent to parkin is a component of Lewy bodies and suppresses Pael receptor-induced cell death.</title>
        <authorList>
            <person name="Imai Y."/>
            <person name="Soda M."/>
            <person name="Murakami T."/>
            <person name="Shoji M."/>
            <person name="Abe K."/>
            <person name="Takahashi R."/>
        </authorList>
    </citation>
    <scope>INTERACTION WITH PACRG</scope>
</reference>
<reference key="9">
    <citation type="journal article" date="2003" name="Nature">
        <title>Proteomic characterization of the human centrosome by protein correlation profiling.</title>
        <authorList>
            <person name="Andersen J.S."/>
            <person name="Wilkinson C.J."/>
            <person name="Mayor T."/>
            <person name="Mortensen P."/>
            <person name="Nigg E.A."/>
            <person name="Mann M."/>
        </authorList>
    </citation>
    <scope>IDENTIFICATION BY MASS SPECTROMETRY</scope>
    <scope>SUBCELLULAR LOCATION [LARGE SCALE ANALYSIS]</scope>
    <source>
        <tissue>Lymphoblast</tissue>
    </source>
</reference>
<reference key="10">
    <citation type="journal article" date="2006" name="J. Proteome Res.">
        <title>Proteomic and bioinformatic characterization of the biogenesis and function of melanosomes.</title>
        <authorList>
            <person name="Chi A."/>
            <person name="Valencia J.C."/>
            <person name="Hu Z.-Z."/>
            <person name="Watabe H."/>
            <person name="Yamaguchi H."/>
            <person name="Mangini N.J."/>
            <person name="Huang H."/>
            <person name="Canfield V.A."/>
            <person name="Cheng K.C."/>
            <person name="Yang F."/>
            <person name="Abe R."/>
            <person name="Yamagishi S."/>
            <person name="Shabanowitz J."/>
            <person name="Hearing V.J."/>
            <person name="Wu C."/>
            <person name="Appella E."/>
            <person name="Hunt D.F."/>
        </authorList>
    </citation>
    <scope>SUBCELLULAR LOCATION [LARGE SCALE ANALYSIS]</scope>
    <source>
        <tissue>Melanoma</tissue>
    </source>
</reference>
<reference key="11">
    <citation type="journal article" date="2009" name="Science">
        <title>Lysine acetylation targets protein complexes and co-regulates major cellular functions.</title>
        <authorList>
            <person name="Choudhary C."/>
            <person name="Kumar C."/>
            <person name="Gnad F."/>
            <person name="Nielsen M.L."/>
            <person name="Rehman M."/>
            <person name="Walther T.C."/>
            <person name="Olsen J.V."/>
            <person name="Mann M."/>
        </authorList>
    </citation>
    <scope>ACETYLATION [LARGE SCALE ANALYSIS] AT LYS-288; LYS-302; LYS-319 AND LYS-326</scope>
    <scope>IDENTIFICATION BY MASS SPECTROMETRY [LARGE SCALE ANALYSIS]</scope>
</reference>
<reference key="12">
    <citation type="journal article" date="2010" name="Proc. Natl. Acad. Sci. U.S.A.">
        <title>BBS6, BBS10, and BBS12 form a complex with CCT/TRiC family chaperonins and mediate BBSome assembly.</title>
        <authorList>
            <person name="Seo S."/>
            <person name="Baye L.M."/>
            <person name="Schulz N.P."/>
            <person name="Beck J.S."/>
            <person name="Zhang Q."/>
            <person name="Slusarski D.C."/>
            <person name="Sheffield V.C."/>
        </authorList>
    </citation>
    <scope>FUNCTION</scope>
    <scope>SUBCELLULAR LOCATION</scope>
    <scope>IDENTIFICATION IN THE CHAPERONIN-CONTAINING T-COMPLEX</scope>
</reference>
<reference key="13">
    <citation type="journal article" date="2011" name="BMC Syst. Biol.">
        <title>Initial characterization of the human central proteome.</title>
        <authorList>
            <person name="Burkard T.R."/>
            <person name="Planyavsky M."/>
            <person name="Kaupe I."/>
            <person name="Breitwieser F.P."/>
            <person name="Buerckstuemmer T."/>
            <person name="Bennett K.L."/>
            <person name="Superti-Furga G."/>
            <person name="Colinge J."/>
        </authorList>
    </citation>
    <scope>IDENTIFICATION BY MASS SPECTROMETRY [LARGE SCALE ANALYSIS]</scope>
</reference>
<reference key="14">
    <citation type="journal article" date="2012" name="Proc. Natl. Acad. Sci. U.S.A.">
        <title>N-terminal acetylome analyses and functional insights of the N-terminal acetyltransferase NatB.</title>
        <authorList>
            <person name="Van Damme P."/>
            <person name="Lasa M."/>
            <person name="Polevoda B."/>
            <person name="Gazquez C."/>
            <person name="Elosegui-Artola A."/>
            <person name="Kim D.S."/>
            <person name="De Juan-Pardo E."/>
            <person name="Demeyer K."/>
            <person name="Hole K."/>
            <person name="Larrea E."/>
            <person name="Timmerman E."/>
            <person name="Prieto J."/>
            <person name="Arnesen T."/>
            <person name="Sherman F."/>
            <person name="Gevaert K."/>
            <person name="Aldabe R."/>
        </authorList>
    </citation>
    <scope>IDENTIFICATION BY MASS SPECTROMETRY [LARGE SCALE ANALYSIS]</scope>
</reference>
<reference key="15">
    <citation type="journal article" date="2013" name="J. Biol. Chem.">
        <title>Human CCT4 and CCT5 chaperonin subunits expressed in Escherichia coli form biologically active homo-oligomers.</title>
        <authorList>
            <person name="Sergeeva O.A."/>
            <person name="Chen B."/>
            <person name="Haase-Pettingell C."/>
            <person name="Ludtke S.J."/>
            <person name="Chiu W."/>
            <person name="King J.A."/>
        </authorList>
    </citation>
    <scope>CATALYTIC ACTIVITY</scope>
</reference>
<reference key="16">
    <citation type="journal article" date="2014" name="Cell">
        <title>Proteostatic control of telomerase function through TRiC-mediated folding of TCAB1.</title>
        <authorList>
            <person name="Freund A."/>
            <person name="Zhong F.L."/>
            <person name="Venteicher A.S."/>
            <person name="Meng Z."/>
            <person name="Veenstra T.D."/>
            <person name="Frydman J."/>
            <person name="Artandi S.E."/>
        </authorList>
    </citation>
    <scope>FUNCTION</scope>
    <scope>IDENTIFICATION IN THE CHAPERONIN-CONTAINING T-COMPLEX</scope>
</reference>
<reference key="17">
    <citation type="journal article" date="2013" name="J. Proteome Res.">
        <title>Toward a comprehensive characterization of a human cancer cell phosphoproteome.</title>
        <authorList>
            <person name="Zhou H."/>
            <person name="Di Palma S."/>
            <person name="Preisinger C."/>
            <person name="Peng M."/>
            <person name="Polat A.N."/>
            <person name="Heck A.J."/>
            <person name="Mohammed S."/>
        </authorList>
    </citation>
    <scope>PHOSPHORYLATION [LARGE SCALE ANALYSIS] AT SER-36; SER-184; SER-202 AND SER-444</scope>
    <scope>IDENTIFICATION BY MASS SPECTROMETRY [LARGE SCALE ANALYSIS]</scope>
    <source>
        <tissue>Cervix carcinoma</tissue>
        <tissue>Erythroleukemia</tissue>
    </source>
</reference>
<reference key="18">
    <citation type="journal article" date="2014" name="J. Proteomics">
        <title>An enzyme assisted RP-RPLC approach for in-depth analysis of human liver phosphoproteome.</title>
        <authorList>
            <person name="Bian Y."/>
            <person name="Song C."/>
            <person name="Cheng K."/>
            <person name="Dong M."/>
            <person name="Wang F."/>
            <person name="Huang J."/>
            <person name="Sun D."/>
            <person name="Wang L."/>
            <person name="Ye M."/>
            <person name="Zou H."/>
        </authorList>
    </citation>
    <scope>IDENTIFICATION BY MASS SPECTROMETRY [LARGE SCALE ANALYSIS]</scope>
    <source>
        <tissue>Liver</tissue>
    </source>
</reference>
<reference key="19">
    <citation type="journal article" date="2014" name="Mol. Cell. Proteomics">
        <title>Immunoaffinity enrichment and mass spectrometry analysis of protein methylation.</title>
        <authorList>
            <person name="Guo A."/>
            <person name="Gu H."/>
            <person name="Zhou J."/>
            <person name="Mulhern D."/>
            <person name="Wang Y."/>
            <person name="Lee K.A."/>
            <person name="Yang V."/>
            <person name="Aguiar M."/>
            <person name="Kornhauser J."/>
            <person name="Jia X."/>
            <person name="Ren J."/>
            <person name="Beausoleil S.A."/>
            <person name="Silva J.C."/>
            <person name="Vemulapalli V."/>
            <person name="Bedford M.T."/>
            <person name="Comb M.J."/>
        </authorList>
    </citation>
    <scope>METHYLATION [LARGE SCALE ANALYSIS] AT ARG-19</scope>
    <scope>IDENTIFICATION BY MASS SPECTROMETRY [LARGE SCALE ANALYSIS]</scope>
    <source>
        <tissue>Colon carcinoma</tissue>
    </source>
</reference>
<reference key="20">
    <citation type="journal article" date="2015" name="Proteomics">
        <title>N-terminome analysis of the human mitochondrial proteome.</title>
        <authorList>
            <person name="Vaca Jacome A.S."/>
            <person name="Rabilloud T."/>
            <person name="Schaeffer-Reiss C."/>
            <person name="Rompais M."/>
            <person name="Ayoub D."/>
            <person name="Lane L."/>
            <person name="Bairoch A."/>
            <person name="Van Dorsselaer A."/>
            <person name="Carapito C."/>
        </authorList>
    </citation>
    <scope>IDENTIFICATION BY MASS SPECTROMETRY [LARGE SCALE ANALYSIS]</scope>
</reference>
<reference key="21">
    <citation type="journal article" date="2020" name="Sci. Rep.">
        <title>Dlec1 is required for spermatogenesis and male fertility in mice.</title>
        <authorList>
            <person name="Okitsu Y."/>
            <person name="Nagano M."/>
            <person name="Yamagata T."/>
            <person name="Ito C."/>
            <person name="Toshimori K."/>
            <person name="Dohra H."/>
            <person name="Fujii W."/>
            <person name="Yogo K."/>
        </authorList>
    </citation>
    <scope>INTERACTION WITH DLEC1</scope>
</reference>
<reference evidence="21 22 23 24 25" key="22">
    <citation type="journal article" date="2022" name="Cell">
        <title>Structural visualization of the tubulin folding pathway directed by human chaperonin TRiC/CCT.</title>
        <authorList>
            <person name="Gestaut D."/>
            <person name="Zhao Y."/>
            <person name="Park J."/>
            <person name="Ma B."/>
            <person name="Leitner A."/>
            <person name="Collier M."/>
            <person name="Pintilie G."/>
            <person name="Roh S.H."/>
            <person name="Chiu W."/>
            <person name="Frydman J."/>
        </authorList>
    </citation>
    <scope>STRUCTURE BY ELECTRON MICROSCOPY (2.90 ANGSTROMS) IN COMPLEX WITH TUBULIN</scope>
    <scope>FUNCTION</scope>
    <scope>SUBUNIT</scope>
    <scope>ADP AND MG(2+) BINDING SITES</scope>
</reference>
<reference evidence="17 18 19 20" key="23">
    <citation type="journal article" date="2022" name="Nat. Struct. Mol. Biol.">
        <title>Snapshots of actin and tubulin folding inside the TRiC chaperonin.</title>
        <authorList>
            <person name="Kelly J.J."/>
            <person name="Tranter D."/>
            <person name="Pardon E."/>
            <person name="Chi G."/>
            <person name="Kramer H."/>
            <person name="Happonen L."/>
            <person name="Knee K.M."/>
            <person name="Janz J.M."/>
            <person name="Steyaert J."/>
            <person name="Bulawa C."/>
            <person name="Paavilainen V.O."/>
            <person name="Huiskonen J.T."/>
            <person name="Yue W.W."/>
        </authorList>
    </citation>
    <scope>STRUCTURE BY ELECTRON MICROSCOPY (2.50 ANGSTROMS) IN COMPLEX WITH TUBULIN AND IN COMPLEX WITH ACTIN</scope>
    <scope>FUNCTION</scope>
    <scope>SUBUNIT</scope>
    <scope>ADP AND MG(2+) BINDING SITES</scope>
</reference>
<reference evidence="26 27 28 29 30 31 32 33" key="24">
    <citation type="journal article" date="2023" name="Commun. Biol.">
        <title>Pathway and mechanism of tubulin folding mediated by TRiC/CCT along its ATPase cycle revealed using cryo-EM.</title>
        <authorList>
            <person name="Liu C."/>
            <person name="Jin M."/>
            <person name="Wang S."/>
            <person name="Han W."/>
            <person name="Zhao Q."/>
            <person name="Wang Y."/>
            <person name="Xu C."/>
            <person name="Diao L."/>
            <person name="Yin Y."/>
            <person name="Peng C."/>
            <person name="Peng C."/>
            <person name="Bao L."/>
            <person name="Wang Y."/>
            <person name="Cong Y."/>
        </authorList>
    </citation>
    <scope>STRUCTURE BY ELECTRON MICROSCOPY (3.10 ANGSTROMS) IN COMPLEX WITH TUBULIN</scope>
    <scope>FUNCTION</scope>
    <scope>SUBUNIT</scope>
    <scope>ATP; ADP AND MG(2+) BINDING SITES</scope>
</reference>
<reference key="25">
    <citation type="journal article" date="2024" name="Science">
        <title>Brain malformations and seizures by impaired chaperonin function of TRiC.</title>
        <authorList>
            <person name="Kraft F."/>
            <person name="Rodriguez-Aliaga P."/>
            <person name="Yuan W."/>
            <person name="Franken L."/>
            <person name="Zajt K."/>
            <person name="Hasan D."/>
            <person name="Lee T.T."/>
            <person name="Flex E."/>
            <person name="Hentschel A."/>
            <person name="Innes A.M."/>
            <person name="Zheng B."/>
            <person name="Julia Suh D.S."/>
            <person name="Knopp C."/>
            <person name="Lausberg E."/>
            <person name="Krause J."/>
            <person name="Zhang X."/>
            <person name="Trapane P."/>
            <person name="Carroll R."/>
            <person name="McClatchey M."/>
            <person name="Fry A.E."/>
            <person name="Wang L."/>
            <person name="Giesselmann S."/>
            <person name="Hoang H."/>
            <person name="Baldridge D."/>
            <person name="Silverman G.A."/>
            <person name="Radio F.C."/>
            <person name="Bertini E."/>
            <person name="Ciolfi A."/>
            <person name="Blood K.A."/>
            <person name="de Sainte Agathe J.M."/>
            <person name="Charles P."/>
            <person name="Bergant G."/>
            <person name="Cuturilo G."/>
            <person name="Peterlin B."/>
            <person name="Diderich K."/>
            <person name="Streff H."/>
            <person name="Robak L."/>
            <person name="Oegema R."/>
            <person name="van Binsbergen E."/>
            <person name="Herriges J."/>
            <person name="Saunders C.J."/>
            <person name="Maier A."/>
            <person name="Wolking S."/>
            <person name="Weber Y."/>
            <person name="Lochmueller H."/>
            <person name="Meyer S."/>
            <person name="Aleman A."/>
            <person name="Polavarapu K."/>
            <person name="Nicolas G."/>
            <person name="Goldenberg A."/>
            <person name="Guyant L."/>
            <person name="Pope K."/>
            <person name="Hehmeyer K.N."/>
            <person name="Monaghan K.G."/>
            <person name="Quade A."/>
            <person name="Smol T."/>
            <person name="Caumes R."/>
            <person name="Duerinckx S."/>
            <person name="Depondt C."/>
            <person name="Van Paesschen W."/>
            <person name="Rieubland C."/>
            <person name="Poloni C."/>
            <person name="Guipponi M."/>
            <person name="Arcioni S."/>
            <person name="Meuwissen M."/>
            <person name="Jansen A.C."/>
            <person name="Rosenblum J."/>
            <person name="Haack T.B."/>
            <person name="Bertrand M."/>
            <person name="Gerstner L."/>
            <person name="Magg J."/>
            <person name="Riess O."/>
            <person name="Schulz J.B."/>
            <person name="Wagner N."/>
            <person name="Wiesmann M."/>
            <person name="Weis J."/>
            <person name="Eggermann T."/>
            <person name="Begemann M."/>
            <person name="Roos A."/>
            <person name="Haeusler M."/>
            <person name="Schedl T."/>
            <person name="Tartaglia M."/>
            <person name="Bremer J."/>
            <person name="Pak S.C."/>
            <person name="Frydman J."/>
            <person name="Elbracht M."/>
            <person name="Kurth I."/>
        </authorList>
    </citation>
    <scope>INVOLVEMENT IN BRAIN DEVELOPMENTAL DISORDERS</scope>
</reference>
<name>TCPD_HUMAN</name>
<dbReference type="EC" id="3.6.1.-" evidence="8"/>
<dbReference type="EMBL" id="U38846">
    <property type="protein sequence ID" value="AAC50384.1"/>
    <property type="molecule type" value="mRNA"/>
</dbReference>
<dbReference type="EMBL" id="AF026291">
    <property type="protein sequence ID" value="AAC96010.1"/>
    <property type="molecule type" value="mRNA"/>
</dbReference>
<dbReference type="EMBL" id="AK303082">
    <property type="protein sequence ID" value="BAH13897.1"/>
    <property type="molecule type" value="mRNA"/>
</dbReference>
<dbReference type="EMBL" id="AK312586">
    <property type="protein sequence ID" value="BAG35480.1"/>
    <property type="molecule type" value="mRNA"/>
</dbReference>
<dbReference type="EMBL" id="AC107081">
    <property type="protein sequence ID" value="AAY24140.1"/>
    <property type="molecule type" value="Genomic_DNA"/>
</dbReference>
<dbReference type="EMBL" id="BC014676">
    <property type="protein sequence ID" value="AAH14676.1"/>
    <property type="molecule type" value="mRNA"/>
</dbReference>
<dbReference type="EMBL" id="BC106934">
    <property type="protein sequence ID" value="AAI06935.1"/>
    <property type="molecule type" value="mRNA"/>
</dbReference>
<dbReference type="EMBL" id="BC106933">
    <property type="protein sequence ID" value="AAI06934.1"/>
    <property type="molecule type" value="mRNA"/>
</dbReference>
<dbReference type="CCDS" id="CCDS33206.1">
    <molecule id="P50991-1"/>
</dbReference>
<dbReference type="CCDS" id="CCDS58711.1">
    <molecule id="P50991-2"/>
</dbReference>
<dbReference type="RefSeq" id="NP_001243650.1">
    <molecule id="P50991-2"/>
    <property type="nucleotide sequence ID" value="NM_001256721.1"/>
</dbReference>
<dbReference type="RefSeq" id="NP_006421.2">
    <molecule id="P50991-1"/>
    <property type="nucleotide sequence ID" value="NM_006430.3"/>
</dbReference>
<dbReference type="PDB" id="6NR8">
    <property type="method" value="EM"/>
    <property type="resolution" value="7.80 A"/>
    <property type="chains" value="D/L=26-539"/>
</dbReference>
<dbReference type="PDB" id="6NR9">
    <property type="method" value="EM"/>
    <property type="resolution" value="8.50 A"/>
    <property type="chains" value="D/L=26-539"/>
</dbReference>
<dbReference type="PDB" id="6NRA">
    <property type="method" value="EM"/>
    <property type="resolution" value="7.70 A"/>
    <property type="chains" value="D/L=26-539"/>
</dbReference>
<dbReference type="PDB" id="6NRB">
    <property type="method" value="EM"/>
    <property type="resolution" value="8.70 A"/>
    <property type="chains" value="D/L=26-539"/>
</dbReference>
<dbReference type="PDB" id="6NRC">
    <property type="method" value="EM"/>
    <property type="resolution" value="8.30 A"/>
    <property type="chains" value="D/L=26-539"/>
</dbReference>
<dbReference type="PDB" id="6NRD">
    <property type="method" value="EM"/>
    <property type="resolution" value="8.20 A"/>
    <property type="chains" value="D/L=26-539"/>
</dbReference>
<dbReference type="PDB" id="6QB8">
    <property type="method" value="EM"/>
    <property type="resolution" value="3.97 A"/>
    <property type="chains" value="D/d=1-539"/>
</dbReference>
<dbReference type="PDB" id="7LUM">
    <property type="method" value="EM"/>
    <property type="resolution" value="4.50 A"/>
    <property type="chains" value="F/N=1-539"/>
</dbReference>
<dbReference type="PDB" id="7LUP">
    <property type="method" value="EM"/>
    <property type="resolution" value="6.20 A"/>
    <property type="chains" value="F/N=1-539"/>
</dbReference>
<dbReference type="PDB" id="7NVL">
    <property type="method" value="EM"/>
    <property type="resolution" value="2.50 A"/>
    <property type="chains" value="D/d=1-539"/>
</dbReference>
<dbReference type="PDB" id="7NVM">
    <property type="method" value="EM"/>
    <property type="resolution" value="3.10 A"/>
    <property type="chains" value="D/d=1-539"/>
</dbReference>
<dbReference type="PDB" id="7NVN">
    <property type="method" value="EM"/>
    <property type="resolution" value="3.00 A"/>
    <property type="chains" value="D/d=1-539"/>
</dbReference>
<dbReference type="PDB" id="7NVO">
    <property type="method" value="EM"/>
    <property type="resolution" value="3.50 A"/>
    <property type="chains" value="D/d=1-539"/>
</dbReference>
<dbReference type="PDB" id="7TRG">
    <property type="method" value="EM"/>
    <property type="resolution" value="3.00 A"/>
    <property type="chains" value="F=1-539"/>
</dbReference>
<dbReference type="PDB" id="7TTN">
    <property type="method" value="EM"/>
    <property type="resolution" value="3.30 A"/>
    <property type="chains" value="F=1-539"/>
</dbReference>
<dbReference type="PDB" id="7TTT">
    <property type="method" value="EM"/>
    <property type="resolution" value="2.90 A"/>
    <property type="chains" value="F=1-539"/>
</dbReference>
<dbReference type="PDB" id="7TUB">
    <property type="method" value="EM"/>
    <property type="resolution" value="3.60 A"/>
    <property type="chains" value="F=1-539"/>
</dbReference>
<dbReference type="PDB" id="7WU7">
    <property type="method" value="EM"/>
    <property type="resolution" value="3.85 A"/>
    <property type="chains" value="D/L=1-539"/>
</dbReference>
<dbReference type="PDB" id="7WZ3">
    <property type="method" value="EM"/>
    <property type="resolution" value="4.10 A"/>
    <property type="chains" value="D/d=1-539"/>
</dbReference>
<dbReference type="PDB" id="7X0A">
    <property type="method" value="EM"/>
    <property type="resolution" value="3.10 A"/>
    <property type="chains" value="D/d=1-539"/>
</dbReference>
<dbReference type="PDB" id="7X0S">
    <property type="method" value="EM"/>
    <property type="resolution" value="3.10 A"/>
    <property type="chains" value="I/M=1-539"/>
</dbReference>
<dbReference type="PDB" id="7X0V">
    <property type="method" value="EM"/>
    <property type="resolution" value="3.20 A"/>
    <property type="chains" value="I/M=1-539"/>
</dbReference>
<dbReference type="PDB" id="7X3J">
    <property type="method" value="EM"/>
    <property type="resolution" value="4.20 A"/>
    <property type="chains" value="D/d=1-539"/>
</dbReference>
<dbReference type="PDB" id="7X3U">
    <property type="method" value="EM"/>
    <property type="resolution" value="3.30 A"/>
    <property type="chains" value="D/d=1-539"/>
</dbReference>
<dbReference type="PDB" id="7X6Q">
    <property type="method" value="EM"/>
    <property type="resolution" value="4.50 A"/>
    <property type="chains" value="I/M=1-539"/>
</dbReference>
<dbReference type="PDB" id="7X7Y">
    <property type="method" value="EM"/>
    <property type="resolution" value="3.80 A"/>
    <property type="chains" value="D/d=1-539"/>
</dbReference>
<dbReference type="PDB" id="8HKI">
    <property type="method" value="EM"/>
    <property type="resolution" value="3.10 A"/>
    <property type="chains" value="D/d=1-539"/>
</dbReference>
<dbReference type="PDB" id="8I1U">
    <property type="method" value="EM"/>
    <property type="resolution" value="3.24 A"/>
    <property type="chains" value="D/L=1-539"/>
</dbReference>
<dbReference type="PDB" id="8I9Q">
    <property type="method" value="EM"/>
    <property type="resolution" value="4.22 A"/>
    <property type="chains" value="D=1-539"/>
</dbReference>
<dbReference type="PDB" id="8I9U">
    <property type="method" value="EM"/>
    <property type="resolution" value="3.10 A"/>
    <property type="chains" value="D/L=1-539"/>
</dbReference>
<dbReference type="PDB" id="8IB8">
    <property type="method" value="EM"/>
    <property type="resolution" value="4.42 A"/>
    <property type="chains" value="D/L=1-539"/>
</dbReference>
<dbReference type="PDB" id="8SFE">
    <property type="method" value="EM"/>
    <property type="resolution" value="3.36 A"/>
    <property type="chains" value="D/d=19-539"/>
</dbReference>
<dbReference type="PDB" id="8SFF">
    <property type="method" value="EM"/>
    <property type="resolution" value="3.20 A"/>
    <property type="chains" value="D/d=19-538"/>
</dbReference>
<dbReference type="PDB" id="8SG8">
    <property type="method" value="EM"/>
    <property type="resolution" value="3.00 A"/>
    <property type="chains" value="D/d=19-538"/>
</dbReference>
<dbReference type="PDB" id="8SG9">
    <property type="method" value="EM"/>
    <property type="resolution" value="2.90 A"/>
    <property type="chains" value="D/d=19-538"/>
</dbReference>
<dbReference type="PDB" id="8SGC">
    <property type="method" value="EM"/>
    <property type="resolution" value="2.90 A"/>
    <property type="chains" value="D/d=19-538"/>
</dbReference>
<dbReference type="PDB" id="8SGL">
    <property type="method" value="EM"/>
    <property type="resolution" value="2.90 A"/>
    <property type="chains" value="D/d=19-538"/>
</dbReference>
<dbReference type="PDB" id="8SGQ">
    <property type="method" value="EM"/>
    <property type="resolution" value="3.70 A"/>
    <property type="chains" value="D/d=19-538"/>
</dbReference>
<dbReference type="PDB" id="8SH9">
    <property type="method" value="EM"/>
    <property type="resolution" value="2.70 A"/>
    <property type="chains" value="D/d=19-538"/>
</dbReference>
<dbReference type="PDB" id="8SHA">
    <property type="method" value="EM"/>
    <property type="resolution" value="3.00 A"/>
    <property type="chains" value="D/d=19-538"/>
</dbReference>
<dbReference type="PDB" id="8SHD">
    <property type="method" value="EM"/>
    <property type="resolution" value="2.90 A"/>
    <property type="chains" value="D/d=19-538"/>
</dbReference>
<dbReference type="PDB" id="8SHE">
    <property type="method" value="EM"/>
    <property type="resolution" value="2.80 A"/>
    <property type="chains" value="D/d=19-538"/>
</dbReference>
<dbReference type="PDB" id="8SHF">
    <property type="method" value="EM"/>
    <property type="resolution" value="3.00 A"/>
    <property type="chains" value="D/d=19-538"/>
</dbReference>
<dbReference type="PDB" id="8SHG">
    <property type="method" value="EM"/>
    <property type="resolution" value="2.80 A"/>
    <property type="chains" value="D/d=19-538"/>
</dbReference>
<dbReference type="PDB" id="8SHL">
    <property type="method" value="EM"/>
    <property type="resolution" value="3.00 A"/>
    <property type="chains" value="D/d=19-538"/>
</dbReference>
<dbReference type="PDB" id="8SHN">
    <property type="method" value="EM"/>
    <property type="resolution" value="2.80 A"/>
    <property type="chains" value="D/d=19-538"/>
</dbReference>
<dbReference type="PDB" id="8SHO">
    <property type="method" value="EM"/>
    <property type="resolution" value="3.00 A"/>
    <property type="chains" value="D/d=19-538"/>
</dbReference>
<dbReference type="PDB" id="8SHP">
    <property type="method" value="EM"/>
    <property type="resolution" value="3.00 A"/>
    <property type="chains" value="D/d=19-538"/>
</dbReference>
<dbReference type="PDB" id="8SHQ">
    <property type="method" value="EM"/>
    <property type="resolution" value="2.90 A"/>
    <property type="chains" value="D/d=19-538"/>
</dbReference>
<dbReference type="PDB" id="8SHT">
    <property type="method" value="EM"/>
    <property type="resolution" value="3.00 A"/>
    <property type="chains" value="D/d=19-538"/>
</dbReference>
<dbReference type="PDBsum" id="6NR8"/>
<dbReference type="PDBsum" id="6NR9"/>
<dbReference type="PDBsum" id="6NRA"/>
<dbReference type="PDBsum" id="6NRB"/>
<dbReference type="PDBsum" id="6NRC"/>
<dbReference type="PDBsum" id="6NRD"/>
<dbReference type="PDBsum" id="6QB8"/>
<dbReference type="PDBsum" id="7LUM"/>
<dbReference type="PDBsum" id="7LUP"/>
<dbReference type="PDBsum" id="7NVL"/>
<dbReference type="PDBsum" id="7NVM"/>
<dbReference type="PDBsum" id="7NVN"/>
<dbReference type="PDBsum" id="7NVO"/>
<dbReference type="PDBsum" id="7TRG"/>
<dbReference type="PDBsum" id="7TTN"/>
<dbReference type="PDBsum" id="7TTT"/>
<dbReference type="PDBsum" id="7TUB"/>
<dbReference type="PDBsum" id="7WU7"/>
<dbReference type="PDBsum" id="7WZ3"/>
<dbReference type="PDBsum" id="7X0A"/>
<dbReference type="PDBsum" id="7X0S"/>
<dbReference type="PDBsum" id="7X0V"/>
<dbReference type="PDBsum" id="7X3J"/>
<dbReference type="PDBsum" id="7X3U"/>
<dbReference type="PDBsum" id="7X6Q"/>
<dbReference type="PDBsum" id="7X7Y"/>
<dbReference type="PDBsum" id="8HKI"/>
<dbReference type="PDBsum" id="8I1U"/>
<dbReference type="PDBsum" id="8I9Q"/>
<dbReference type="PDBsum" id="8I9U"/>
<dbReference type="PDBsum" id="8IB8"/>
<dbReference type="PDBsum" id="8SFE"/>
<dbReference type="PDBsum" id="8SFF"/>
<dbReference type="PDBsum" id="8SG8"/>
<dbReference type="PDBsum" id="8SG9"/>
<dbReference type="PDBsum" id="8SGC"/>
<dbReference type="PDBsum" id="8SGL"/>
<dbReference type="PDBsum" id="8SGQ"/>
<dbReference type="PDBsum" id="8SH9"/>
<dbReference type="PDBsum" id="8SHA"/>
<dbReference type="PDBsum" id="8SHD"/>
<dbReference type="PDBsum" id="8SHE"/>
<dbReference type="PDBsum" id="8SHF"/>
<dbReference type="PDBsum" id="8SHG"/>
<dbReference type="PDBsum" id="8SHL"/>
<dbReference type="PDBsum" id="8SHN"/>
<dbReference type="PDBsum" id="8SHO"/>
<dbReference type="PDBsum" id="8SHP"/>
<dbReference type="PDBsum" id="8SHQ"/>
<dbReference type="PDBsum" id="8SHT"/>
<dbReference type="EMDB" id="EMD-0490"/>
<dbReference type="EMDB" id="EMD-0491"/>
<dbReference type="EMDB" id="EMD-0492"/>
<dbReference type="EMDB" id="EMD-0493"/>
<dbReference type="EMDB" id="EMD-0494"/>
<dbReference type="EMDB" id="EMD-0495"/>
<dbReference type="EMDB" id="EMD-12605"/>
<dbReference type="EMDB" id="EMD-12606"/>
<dbReference type="EMDB" id="EMD-12607"/>
<dbReference type="EMDB" id="EMD-12608"/>
<dbReference type="EMDB" id="EMD-13754"/>
<dbReference type="EMDB" id="EMD-23522"/>
<dbReference type="EMDB" id="EMD-23526"/>
<dbReference type="EMDB" id="EMD-26089"/>
<dbReference type="EMDB" id="EMD-26120"/>
<dbReference type="EMDB" id="EMD-26123"/>
<dbReference type="EMDB" id="EMD-26131"/>
<dbReference type="EMDB" id="EMD-32823"/>
<dbReference type="EMDB" id="EMD-32903"/>
<dbReference type="EMDB" id="EMD-32922"/>
<dbReference type="EMDB" id="EMD-32923"/>
<dbReference type="EMDB" id="EMD-32926"/>
<dbReference type="EMDB" id="EMD-32989"/>
<dbReference type="EMDB" id="EMD-32993"/>
<dbReference type="EMDB" id="EMD-33025"/>
<dbReference type="EMDB" id="EMD-33053"/>
<dbReference type="EMDB" id="EMD-34852"/>
<dbReference type="EMDB" id="EMD-35122"/>
<dbReference type="EMDB" id="EMD-35280"/>
<dbReference type="EMDB" id="EMD-35284"/>
<dbReference type="EMDB" id="EMD-35335"/>
<dbReference type="EMDB" id="EMD-40439"/>
<dbReference type="EMDB" id="EMD-40440"/>
<dbReference type="EMDB" id="EMD-40452"/>
<dbReference type="EMDB" id="EMD-40453"/>
<dbReference type="EMDB" id="EMD-40454"/>
<dbReference type="EMDB" id="EMD-40461"/>
<dbReference type="EMDB" id="EMD-40464"/>
<dbReference type="EMDB" id="EMD-40481"/>
<dbReference type="EMDB" id="EMD-40482"/>
<dbReference type="EMDB" id="EMD-40484"/>
<dbReference type="EMDB" id="EMD-40485"/>
<dbReference type="EMDB" id="EMD-40486"/>
<dbReference type="EMDB" id="EMD-40487"/>
<dbReference type="EMDB" id="EMD-40488"/>
<dbReference type="EMDB" id="EMD-40489"/>
<dbReference type="EMDB" id="EMD-40490"/>
<dbReference type="EMDB" id="EMD-40491"/>
<dbReference type="EMDB" id="EMD-40492"/>
<dbReference type="EMDB" id="EMD-40494"/>
<dbReference type="EMDB" id="EMD-4489"/>
<dbReference type="SMR" id="P50991"/>
<dbReference type="BioGRID" id="115826">
    <property type="interactions" value="580"/>
</dbReference>
<dbReference type="ComplexPortal" id="CPX-6030">
    <property type="entry name" value="Chaperonin-containing T-complex"/>
</dbReference>
<dbReference type="CORUM" id="P50991"/>
<dbReference type="DIP" id="DIP-32971N"/>
<dbReference type="FunCoup" id="P50991">
    <property type="interactions" value="4398"/>
</dbReference>
<dbReference type="IntAct" id="P50991">
    <property type="interactions" value="291"/>
</dbReference>
<dbReference type="MINT" id="P50991"/>
<dbReference type="STRING" id="9606.ENSP00000377958"/>
<dbReference type="TCDB" id="3.A.33.1.1">
    <property type="family name" value="the bbsome complex (bbsome) family"/>
</dbReference>
<dbReference type="GlyCosmos" id="P50991">
    <property type="glycosylation" value="1 site, 1 glycan"/>
</dbReference>
<dbReference type="GlyGen" id="P50991">
    <property type="glycosylation" value="4 sites, 1 O-linked glycan (4 sites)"/>
</dbReference>
<dbReference type="iPTMnet" id="P50991"/>
<dbReference type="MetOSite" id="P50991"/>
<dbReference type="PhosphoSitePlus" id="P50991"/>
<dbReference type="SwissPalm" id="P50991"/>
<dbReference type="BioMuta" id="CCT4"/>
<dbReference type="DMDM" id="52001478"/>
<dbReference type="REPRODUCTION-2DPAGE" id="IPI00302927"/>
<dbReference type="jPOST" id="P50991"/>
<dbReference type="MassIVE" id="P50991"/>
<dbReference type="PaxDb" id="9606-ENSP00000377958"/>
<dbReference type="PeptideAtlas" id="P50991"/>
<dbReference type="ProteomicsDB" id="27004"/>
<dbReference type="ProteomicsDB" id="56273">
    <molecule id="P50991-1"/>
</dbReference>
<dbReference type="Pumba" id="P50991"/>
<dbReference type="TopDownProteomics" id="P50991-1">
    <molecule id="P50991-1"/>
</dbReference>
<dbReference type="Antibodypedia" id="15920">
    <property type="antibodies" value="274 antibodies from 32 providers"/>
</dbReference>
<dbReference type="DNASU" id="10575"/>
<dbReference type="Ensembl" id="ENST00000394440.8">
    <molecule id="P50991-1"/>
    <property type="protein sequence ID" value="ENSP00000377958.3"/>
    <property type="gene ID" value="ENSG00000115484.15"/>
</dbReference>
<dbReference type="Ensembl" id="ENST00000544079.2">
    <molecule id="P50991-2"/>
    <property type="protein sequence ID" value="ENSP00000443061.1"/>
    <property type="gene ID" value="ENSG00000115484.15"/>
</dbReference>
<dbReference type="GeneID" id="10575"/>
<dbReference type="KEGG" id="hsa:10575"/>
<dbReference type="MANE-Select" id="ENST00000394440.8">
    <property type="protein sequence ID" value="ENSP00000377958.3"/>
    <property type="RefSeq nucleotide sequence ID" value="NM_006430.4"/>
    <property type="RefSeq protein sequence ID" value="NP_006421.2"/>
</dbReference>
<dbReference type="UCSC" id="uc002sbo.5">
    <molecule id="P50991-1"/>
    <property type="organism name" value="human"/>
</dbReference>
<dbReference type="AGR" id="HGNC:1617"/>
<dbReference type="CTD" id="10575"/>
<dbReference type="DisGeNET" id="10575"/>
<dbReference type="GeneCards" id="CCT4"/>
<dbReference type="HGNC" id="HGNC:1617">
    <property type="gene designation" value="CCT4"/>
</dbReference>
<dbReference type="HPA" id="ENSG00000115484">
    <property type="expression patterns" value="Low tissue specificity"/>
</dbReference>
<dbReference type="MIM" id="605142">
    <property type="type" value="gene"/>
</dbReference>
<dbReference type="neXtProt" id="NX_P50991"/>
<dbReference type="OpenTargets" id="ENSG00000115484"/>
<dbReference type="PharmGKB" id="PA26181"/>
<dbReference type="VEuPathDB" id="HostDB:ENSG00000115484"/>
<dbReference type="eggNOG" id="KOG0358">
    <property type="taxonomic scope" value="Eukaryota"/>
</dbReference>
<dbReference type="GeneTree" id="ENSGT00550000074956"/>
<dbReference type="HOGENOM" id="CLU_008891_9_1_1"/>
<dbReference type="InParanoid" id="P50991"/>
<dbReference type="OMA" id="HPAANMI"/>
<dbReference type="OrthoDB" id="10248520at2759"/>
<dbReference type="PAN-GO" id="P50991">
    <property type="GO annotations" value="3 GO annotations based on evolutionary models"/>
</dbReference>
<dbReference type="PhylomeDB" id="P50991"/>
<dbReference type="TreeFam" id="TF106332"/>
<dbReference type="BRENDA" id="3.6.4.B10">
    <property type="organism ID" value="2681"/>
</dbReference>
<dbReference type="PathwayCommons" id="P50991"/>
<dbReference type="Reactome" id="R-HSA-389957">
    <property type="pathway name" value="Prefoldin mediated transfer of substrate to CCT/TriC"/>
</dbReference>
<dbReference type="Reactome" id="R-HSA-389960">
    <property type="pathway name" value="Formation of tubulin folding intermediates by CCT/TriC"/>
</dbReference>
<dbReference type="Reactome" id="R-HSA-390450">
    <property type="pathway name" value="Folding of actin by CCT/TriC"/>
</dbReference>
<dbReference type="Reactome" id="R-HSA-390471">
    <property type="pathway name" value="Association of TriC/CCT with target proteins during biosynthesis"/>
</dbReference>
<dbReference type="Reactome" id="R-HSA-5620922">
    <property type="pathway name" value="BBSome-mediated cargo-targeting to cilium"/>
</dbReference>
<dbReference type="Reactome" id="R-HSA-6814122">
    <property type="pathway name" value="Cooperation of PDCL (PhLP1) and TRiC/CCT in G-protein beta folding"/>
</dbReference>
<dbReference type="SignaLink" id="P50991"/>
<dbReference type="SIGNOR" id="P50991"/>
<dbReference type="BioGRID-ORCS" id="10575">
    <property type="hits" value="801 hits in 1163 CRISPR screens"/>
</dbReference>
<dbReference type="CD-CODE" id="91857CE7">
    <property type="entry name" value="Nucleolus"/>
</dbReference>
<dbReference type="CD-CODE" id="FB4E32DD">
    <property type="entry name" value="Presynaptic clusters and postsynaptic densities"/>
</dbReference>
<dbReference type="ChiTaRS" id="CCT4">
    <property type="organism name" value="human"/>
</dbReference>
<dbReference type="GeneWiki" id="CCT4"/>
<dbReference type="GenomeRNAi" id="10575"/>
<dbReference type="Pharos" id="P50991">
    <property type="development level" value="Tbio"/>
</dbReference>
<dbReference type="PRO" id="PR:P50991"/>
<dbReference type="Proteomes" id="UP000005640">
    <property type="component" value="Chromosome 2"/>
</dbReference>
<dbReference type="RNAct" id="P50991">
    <property type="molecule type" value="protein"/>
</dbReference>
<dbReference type="Bgee" id="ENSG00000115484">
    <property type="expression patterns" value="Expressed in primordial germ cell in gonad and 213 other cell types or tissues"/>
</dbReference>
<dbReference type="GO" id="GO:0044297">
    <property type="term" value="C:cell body"/>
    <property type="evidence" value="ECO:0007669"/>
    <property type="project" value="Ensembl"/>
</dbReference>
<dbReference type="GO" id="GO:0042995">
    <property type="term" value="C:cell projection"/>
    <property type="evidence" value="ECO:0007669"/>
    <property type="project" value="UniProtKB-KW"/>
</dbReference>
<dbReference type="GO" id="GO:0005813">
    <property type="term" value="C:centrosome"/>
    <property type="evidence" value="ECO:0000314"/>
    <property type="project" value="MGI"/>
</dbReference>
<dbReference type="GO" id="GO:0005832">
    <property type="term" value="C:chaperonin-containing T-complex"/>
    <property type="evidence" value="ECO:0000314"/>
    <property type="project" value="UniProtKB"/>
</dbReference>
<dbReference type="GO" id="GO:0005829">
    <property type="term" value="C:cytosol"/>
    <property type="evidence" value="ECO:0000314"/>
    <property type="project" value="HPA"/>
</dbReference>
<dbReference type="GO" id="GO:0070062">
    <property type="term" value="C:extracellular exosome"/>
    <property type="evidence" value="ECO:0007005"/>
    <property type="project" value="UniProtKB"/>
</dbReference>
<dbReference type="GO" id="GO:0042470">
    <property type="term" value="C:melanosome"/>
    <property type="evidence" value="ECO:0007669"/>
    <property type="project" value="UniProtKB-SubCell"/>
</dbReference>
<dbReference type="GO" id="GO:0005874">
    <property type="term" value="C:microtubule"/>
    <property type="evidence" value="ECO:0000314"/>
    <property type="project" value="UniProtKB"/>
</dbReference>
<dbReference type="GO" id="GO:0005654">
    <property type="term" value="C:nucleoplasm"/>
    <property type="evidence" value="ECO:0000314"/>
    <property type="project" value="HPA"/>
</dbReference>
<dbReference type="GO" id="GO:0002199">
    <property type="term" value="C:zona pellucida receptor complex"/>
    <property type="evidence" value="ECO:0007669"/>
    <property type="project" value="Ensembl"/>
</dbReference>
<dbReference type="GO" id="GO:0005524">
    <property type="term" value="F:ATP binding"/>
    <property type="evidence" value="ECO:0007669"/>
    <property type="project" value="UniProtKB-KW"/>
</dbReference>
<dbReference type="GO" id="GO:0016887">
    <property type="term" value="F:ATP hydrolysis activity"/>
    <property type="evidence" value="ECO:0007669"/>
    <property type="project" value="InterPro"/>
</dbReference>
<dbReference type="GO" id="GO:0140662">
    <property type="term" value="F:ATP-dependent protein folding chaperone"/>
    <property type="evidence" value="ECO:0007669"/>
    <property type="project" value="InterPro"/>
</dbReference>
<dbReference type="GO" id="GO:0044183">
    <property type="term" value="F:protein folding chaperone"/>
    <property type="evidence" value="ECO:0000314"/>
    <property type="project" value="BHF-UCL"/>
</dbReference>
<dbReference type="GO" id="GO:0003723">
    <property type="term" value="F:RNA binding"/>
    <property type="evidence" value="ECO:0007005"/>
    <property type="project" value="UniProtKB"/>
</dbReference>
<dbReference type="GO" id="GO:0051082">
    <property type="term" value="F:unfolded protein binding"/>
    <property type="evidence" value="ECO:0000318"/>
    <property type="project" value="GO_Central"/>
</dbReference>
<dbReference type="GO" id="GO:0007339">
    <property type="term" value="P:binding of sperm to zona pellucida"/>
    <property type="evidence" value="ECO:0007669"/>
    <property type="project" value="Ensembl"/>
</dbReference>
<dbReference type="GO" id="GO:0051086">
    <property type="term" value="P:chaperone mediated protein folding independent of cofactor"/>
    <property type="evidence" value="ECO:0000315"/>
    <property type="project" value="BHF-UCL"/>
</dbReference>
<dbReference type="GO" id="GO:0061077">
    <property type="term" value="P:chaperone-mediated protein folding"/>
    <property type="evidence" value="ECO:0000314"/>
    <property type="project" value="ComplexPortal"/>
</dbReference>
<dbReference type="GO" id="GO:1904871">
    <property type="term" value="P:positive regulation of protein localization to Cajal body"/>
    <property type="evidence" value="ECO:0007001"/>
    <property type="project" value="BHF-UCL"/>
</dbReference>
<dbReference type="GO" id="GO:1904874">
    <property type="term" value="P:positive regulation of telomerase RNA localization to Cajal body"/>
    <property type="evidence" value="ECO:0000315"/>
    <property type="project" value="BHF-UCL"/>
</dbReference>
<dbReference type="GO" id="GO:0032212">
    <property type="term" value="P:positive regulation of telomere maintenance via telomerase"/>
    <property type="evidence" value="ECO:0000315"/>
    <property type="project" value="BHF-UCL"/>
</dbReference>
<dbReference type="GO" id="GO:0006457">
    <property type="term" value="P:protein folding"/>
    <property type="evidence" value="ECO:0000314"/>
    <property type="project" value="FlyBase"/>
</dbReference>
<dbReference type="GO" id="GO:0050821">
    <property type="term" value="P:protein stabilization"/>
    <property type="evidence" value="ECO:0000315"/>
    <property type="project" value="BHF-UCL"/>
</dbReference>
<dbReference type="GO" id="GO:0090666">
    <property type="term" value="P:scaRNA localization to Cajal body"/>
    <property type="evidence" value="ECO:0000315"/>
    <property type="project" value="BHF-UCL"/>
</dbReference>
<dbReference type="CDD" id="cd03338">
    <property type="entry name" value="TCP1_delta"/>
    <property type="match status" value="1"/>
</dbReference>
<dbReference type="FunFam" id="3.50.7.10:FF:000010">
    <property type="entry name" value="T-complex protein 1 subunit delta"/>
    <property type="match status" value="1"/>
</dbReference>
<dbReference type="Gene3D" id="3.50.7.10">
    <property type="entry name" value="GroEL"/>
    <property type="match status" value="1"/>
</dbReference>
<dbReference type="Gene3D" id="1.10.560.10">
    <property type="entry name" value="GroEL-like equatorial domain"/>
    <property type="match status" value="1"/>
</dbReference>
<dbReference type="Gene3D" id="3.30.260.10">
    <property type="entry name" value="TCP-1-like chaperonin intermediate domain"/>
    <property type="match status" value="1"/>
</dbReference>
<dbReference type="InterPro" id="IPR012717">
    <property type="entry name" value="Chap_CCT_delta"/>
</dbReference>
<dbReference type="InterPro" id="IPR017998">
    <property type="entry name" value="Chaperone_TCP-1"/>
</dbReference>
<dbReference type="InterPro" id="IPR002194">
    <property type="entry name" value="Chaperonin_TCP-1_CS"/>
</dbReference>
<dbReference type="InterPro" id="IPR002423">
    <property type="entry name" value="Cpn60/GroEL/TCP-1"/>
</dbReference>
<dbReference type="InterPro" id="IPR027409">
    <property type="entry name" value="GroEL-like_apical_dom_sf"/>
</dbReference>
<dbReference type="InterPro" id="IPR027413">
    <property type="entry name" value="GROEL-like_equatorial_sf"/>
</dbReference>
<dbReference type="InterPro" id="IPR027410">
    <property type="entry name" value="TCP-1-like_intermed_sf"/>
</dbReference>
<dbReference type="InterPro" id="IPR053374">
    <property type="entry name" value="TCP-1_chaperonin"/>
</dbReference>
<dbReference type="InterPro" id="IPR054827">
    <property type="entry name" value="thermosome_alpha"/>
</dbReference>
<dbReference type="NCBIfam" id="TIGR02342">
    <property type="entry name" value="chap_CCT_delta"/>
    <property type="match status" value="1"/>
</dbReference>
<dbReference type="NCBIfam" id="NF041082">
    <property type="entry name" value="thermosome_alpha"/>
    <property type="match status" value="1"/>
</dbReference>
<dbReference type="NCBIfam" id="NF041083">
    <property type="entry name" value="thermosome_beta"/>
    <property type="match status" value="1"/>
</dbReference>
<dbReference type="PANTHER" id="PTHR11353">
    <property type="entry name" value="CHAPERONIN"/>
    <property type="match status" value="1"/>
</dbReference>
<dbReference type="Pfam" id="PF00118">
    <property type="entry name" value="Cpn60_TCP1"/>
    <property type="match status" value="1"/>
</dbReference>
<dbReference type="PRINTS" id="PR00304">
    <property type="entry name" value="TCOMPLEXTCP1"/>
</dbReference>
<dbReference type="SUPFAM" id="SSF52029">
    <property type="entry name" value="GroEL apical domain-like"/>
    <property type="match status" value="1"/>
</dbReference>
<dbReference type="SUPFAM" id="SSF48592">
    <property type="entry name" value="GroEL equatorial domain-like"/>
    <property type="match status" value="1"/>
</dbReference>
<dbReference type="SUPFAM" id="SSF54849">
    <property type="entry name" value="GroEL-intermediate domain like"/>
    <property type="match status" value="1"/>
</dbReference>
<dbReference type="PROSITE" id="PS00750">
    <property type="entry name" value="TCP1_1"/>
    <property type="match status" value="1"/>
</dbReference>
<dbReference type="PROSITE" id="PS00751">
    <property type="entry name" value="TCP1_2"/>
    <property type="match status" value="1"/>
</dbReference>
<dbReference type="PROSITE" id="PS00995">
    <property type="entry name" value="TCP1_3"/>
    <property type="match status" value="1"/>
</dbReference>
<organism>
    <name type="scientific">Homo sapiens</name>
    <name type="common">Human</name>
    <dbReference type="NCBI Taxonomy" id="9606"/>
    <lineage>
        <taxon>Eukaryota</taxon>
        <taxon>Metazoa</taxon>
        <taxon>Chordata</taxon>
        <taxon>Craniata</taxon>
        <taxon>Vertebrata</taxon>
        <taxon>Euteleostomi</taxon>
        <taxon>Mammalia</taxon>
        <taxon>Eutheria</taxon>
        <taxon>Euarchontoglires</taxon>
        <taxon>Primates</taxon>
        <taxon>Haplorrhini</taxon>
        <taxon>Catarrhini</taxon>
        <taxon>Hominidae</taxon>
        <taxon>Homo</taxon>
    </lineage>
</organism>
<gene>
    <name type="primary">CCT4</name>
    <name type="synonym">CCTD</name>
    <name type="synonym">SRB</name>
</gene>
<sequence length="539" mass="57924">MPENVAPRSGATAGAAGGRGKGAYQDRDKPAQIRFSNISAAKAVADAIRTSLGPKGMDKMIQDGKGDVTITNDGATILKQMQVLHPAARMLVELSKAQDIEAGDGTTSVVIIAGSLLDSCTKLLQKGIHPTIISESFQKALEKGIEILTDMSRPVELSDRETLLNSATTSLNSKVVSQYSSLLSPMSVNAVMKVIDPATATSVDLRDIKIVKKLGGTIDDCELVEGLVLTQKVSNSGITRVEKAKIGLIQFCLSAPKTDMDNQIVVSDYAQMDRVLREERAYILNLVKQIKKTGCNVLLIQKSILRDALSDLALHFLNKMKIMVIKDIEREDIEFICKTIGTKPVAHIDQFTADMLGSAELAEEVNLNGSGKLLKITGCASPGKTVTIVVRGSNKLVIEEAERSIHDALCVIRCLVKKRALIAGGGAPEIELALRLTEYSRTLSGMESYCVRAFADAMEVIPSTLAENAGLNPISTVTELRNRHAQGEKTAGINVRKGGISNILEELVVQPLLVSVSALTLATETVRSILKIDDVVNTR</sequence>
<keyword id="KW-0002">3D-structure</keyword>
<keyword id="KW-0007">Acetylation</keyword>
<keyword id="KW-0025">Alternative splicing</keyword>
<keyword id="KW-0067">ATP-binding</keyword>
<keyword id="KW-0966">Cell projection</keyword>
<keyword id="KW-0143">Chaperone</keyword>
<keyword id="KW-0963">Cytoplasm</keyword>
<keyword id="KW-0206">Cytoskeleton</keyword>
<keyword id="KW-0903">Direct protein sequencing</keyword>
<keyword id="KW-0378">Hydrolase</keyword>
<keyword id="KW-0488">Methylation</keyword>
<keyword id="KW-0547">Nucleotide-binding</keyword>
<keyword id="KW-0597">Phosphoprotein</keyword>
<keyword id="KW-1267">Proteomics identification</keyword>
<keyword id="KW-1185">Reference proteome</keyword>
<evidence type="ECO:0000250" key="1">
    <source>
        <dbReference type="UniProtKB" id="P80315"/>
    </source>
</evidence>
<evidence type="ECO:0000256" key="2">
    <source>
        <dbReference type="SAM" id="MobiDB-lite"/>
    </source>
</evidence>
<evidence type="ECO:0000269" key="3">
    <source>
    </source>
</evidence>
<evidence type="ECO:0000269" key="4">
    <source>
    </source>
</evidence>
<evidence type="ECO:0000269" key="5">
    <source>
    </source>
</evidence>
<evidence type="ECO:0000269" key="6">
    <source>
    </source>
</evidence>
<evidence type="ECO:0000269" key="7">
    <source>
    </source>
</evidence>
<evidence type="ECO:0000269" key="8">
    <source>
    </source>
</evidence>
<evidence type="ECO:0000269" key="9">
    <source>
    </source>
</evidence>
<evidence type="ECO:0000269" key="10">
    <source>
    </source>
</evidence>
<evidence type="ECO:0000269" key="11">
    <source>
    </source>
</evidence>
<evidence type="ECO:0000269" key="12">
    <source>
    </source>
</evidence>
<evidence type="ECO:0000269" key="13">
    <source>
    </source>
</evidence>
<evidence type="ECO:0000269" key="14">
    <source>
    </source>
</evidence>
<evidence type="ECO:0000303" key="15">
    <source>
    </source>
</evidence>
<evidence type="ECO:0000305" key="16"/>
<evidence type="ECO:0007744" key="17">
    <source>
        <dbReference type="PDB" id="7NVL"/>
    </source>
</evidence>
<evidence type="ECO:0007744" key="18">
    <source>
        <dbReference type="PDB" id="7NVM"/>
    </source>
</evidence>
<evidence type="ECO:0007744" key="19">
    <source>
        <dbReference type="PDB" id="7NVN"/>
    </source>
</evidence>
<evidence type="ECO:0007744" key="20">
    <source>
        <dbReference type="PDB" id="7NVO"/>
    </source>
</evidence>
<evidence type="ECO:0007744" key="21">
    <source>
        <dbReference type="PDB" id="7TRG"/>
    </source>
</evidence>
<evidence type="ECO:0007744" key="22">
    <source>
        <dbReference type="PDB" id="7TTN"/>
    </source>
</evidence>
<evidence type="ECO:0007744" key="23">
    <source>
        <dbReference type="PDB" id="7TTT"/>
    </source>
</evidence>
<evidence type="ECO:0007744" key="24">
    <source>
        <dbReference type="PDB" id="7TUB"/>
    </source>
</evidence>
<evidence type="ECO:0007744" key="25">
    <source>
        <dbReference type="PDB" id="7WU7"/>
    </source>
</evidence>
<evidence type="ECO:0007744" key="26">
    <source>
        <dbReference type="PDB" id="7WZ3"/>
    </source>
</evidence>
<evidence type="ECO:0007744" key="27">
    <source>
        <dbReference type="PDB" id="7X0A"/>
    </source>
</evidence>
<evidence type="ECO:0007744" key="28">
    <source>
        <dbReference type="PDB" id="7X0S"/>
    </source>
</evidence>
<evidence type="ECO:0007744" key="29">
    <source>
        <dbReference type="PDB" id="7X0V"/>
    </source>
</evidence>
<evidence type="ECO:0007744" key="30">
    <source>
        <dbReference type="PDB" id="7X3J"/>
    </source>
</evidence>
<evidence type="ECO:0007744" key="31">
    <source>
        <dbReference type="PDB" id="7X3U"/>
    </source>
</evidence>
<evidence type="ECO:0007744" key="32">
    <source>
        <dbReference type="PDB" id="7X6Q"/>
    </source>
</evidence>
<evidence type="ECO:0007744" key="33">
    <source>
        <dbReference type="PDB" id="7X7Y"/>
    </source>
</evidence>
<evidence type="ECO:0007744" key="34">
    <source>
    </source>
</evidence>
<evidence type="ECO:0007744" key="35">
    <source>
    </source>
</evidence>
<evidence type="ECO:0007744" key="36">
    <source>
    </source>
</evidence>
<evidence type="ECO:0007829" key="37">
    <source>
        <dbReference type="PDB" id="7NVL"/>
    </source>
</evidence>
<evidence type="ECO:0007829" key="38">
    <source>
        <dbReference type="PDB" id="7TTT"/>
    </source>
</evidence>
<evidence type="ECO:0007829" key="39">
    <source>
        <dbReference type="PDB" id="7X0A"/>
    </source>
</evidence>
<evidence type="ECO:0007829" key="40">
    <source>
        <dbReference type="PDB" id="8SG9"/>
    </source>
</evidence>
<evidence type="ECO:0007829" key="41">
    <source>
        <dbReference type="PDB" id="8SH9"/>
    </source>
</evidence>
<evidence type="ECO:0007829" key="42">
    <source>
        <dbReference type="PDB" id="8SHG"/>
    </source>
</evidence>
<evidence type="ECO:0007829" key="43">
    <source>
        <dbReference type="PDB" id="8SHP"/>
    </source>
</evidence>
<feature type="initiator methionine" description="Removed" evidence="3">
    <location>
        <position position="1"/>
    </location>
</feature>
<feature type="chain" id="PRO_0000128332" description="T-complex protein 1 subunit delta">
    <location>
        <begin position="2"/>
        <end position="539"/>
    </location>
</feature>
<feature type="region of interest" description="Disordered" evidence="2">
    <location>
        <begin position="1"/>
        <end position="29"/>
    </location>
</feature>
<feature type="binding site" evidence="11 12 17 18 19 20 21 22 23 24">
    <location>
        <position position="53"/>
    </location>
    <ligand>
        <name>ADP</name>
        <dbReference type="ChEBI" id="CHEBI:456216"/>
    </ligand>
</feature>
<feature type="binding site" evidence="13 30">
    <location>
        <position position="53"/>
    </location>
    <ligand>
        <name>ATP</name>
        <dbReference type="ChEBI" id="CHEBI:30616"/>
    </ligand>
</feature>
<feature type="binding site" evidence="11 12 13 17 19 20 21 22 23 24 28 29">
    <location>
        <position position="104"/>
    </location>
    <ligand>
        <name>Mg(2+)</name>
        <dbReference type="ChEBI" id="CHEBI:18420"/>
    </ligand>
</feature>
<feature type="binding site" evidence="11 12 18 19 21 22 24">
    <location>
        <position position="105"/>
    </location>
    <ligand>
        <name>ADP</name>
        <dbReference type="ChEBI" id="CHEBI:456216"/>
    </ligand>
</feature>
<feature type="binding site" evidence="13 30">
    <location>
        <position position="105"/>
    </location>
    <ligand>
        <name>ATP</name>
        <dbReference type="ChEBI" id="CHEBI:30616"/>
    </ligand>
</feature>
<feature type="binding site" evidence="11 13 20 28 29">
    <location>
        <position position="106"/>
    </location>
    <ligand>
        <name>ADP</name>
        <dbReference type="ChEBI" id="CHEBI:456216"/>
    </ligand>
</feature>
<feature type="binding site" evidence="13 30">
    <location>
        <position position="106"/>
    </location>
    <ligand>
        <name>ATP</name>
        <dbReference type="ChEBI" id="CHEBI:30616"/>
    </ligand>
</feature>
<feature type="binding site" evidence="11 12 13 17 18 19 21 22 23 24 28 29 31">
    <location>
        <position position="107"/>
    </location>
    <ligand>
        <name>ADP</name>
        <dbReference type="ChEBI" id="CHEBI:456216"/>
    </ligand>
</feature>
<feature type="binding site" evidence="11 12 17 18 19 21 22 23 24">
    <location>
        <position position="108"/>
    </location>
    <ligand>
        <name>ADP</name>
        <dbReference type="ChEBI" id="CHEBI:456216"/>
    </ligand>
</feature>
<feature type="binding site" evidence="11 12 13 17 18 19 21 22 23 28 29">
    <location>
        <position position="172"/>
    </location>
    <ligand>
        <name>ADP</name>
        <dbReference type="ChEBI" id="CHEBI:456216"/>
    </ligand>
</feature>
<feature type="binding site" evidence="11 12 18 19 21 22 23 24">
    <location>
        <position position="173"/>
    </location>
    <ligand>
        <name>ADP</name>
        <dbReference type="ChEBI" id="CHEBI:456216"/>
    </ligand>
</feature>
<feature type="binding site" evidence="11 13 17 31">
    <location>
        <position position="174"/>
    </location>
    <ligand>
        <name>ADP</name>
        <dbReference type="ChEBI" id="CHEBI:456216"/>
    </ligand>
</feature>
<feature type="binding site" evidence="13 30">
    <location>
        <position position="174"/>
    </location>
    <ligand>
        <name>ATP</name>
        <dbReference type="ChEBI" id="CHEBI:30616"/>
    </ligand>
</feature>
<feature type="binding site" evidence="11 12 13 17 18 19 20 21 22 23 24 28 29 31">
    <location>
        <position position="425"/>
    </location>
    <ligand>
        <name>ADP</name>
        <dbReference type="ChEBI" id="CHEBI:456216"/>
    </ligand>
</feature>
<feature type="binding site" evidence="12 21 22">
    <location>
        <position position="510"/>
    </location>
    <ligand>
        <name>ADP</name>
        <dbReference type="ChEBI" id="CHEBI:456216"/>
    </ligand>
</feature>
<feature type="modified residue" description="Omega-N-methylarginine" evidence="36">
    <location>
        <position position="19"/>
    </location>
</feature>
<feature type="modified residue" description="N6-acetyllysine" evidence="1">
    <location>
        <position position="21"/>
    </location>
</feature>
<feature type="modified residue" description="Phosphoserine" evidence="35">
    <location>
        <position position="36"/>
    </location>
</feature>
<feature type="modified residue" description="Phosphoserine" evidence="35">
    <location>
        <position position="184"/>
    </location>
</feature>
<feature type="modified residue" description="Phosphoserine" evidence="35">
    <location>
        <position position="202"/>
    </location>
</feature>
<feature type="modified residue" description="N6-acetyllysine" evidence="34">
    <location>
        <position position="288"/>
    </location>
</feature>
<feature type="modified residue" description="N6-acetyllysine" evidence="34">
    <location>
        <position position="302"/>
    </location>
</feature>
<feature type="modified residue" description="N6-acetyllysine" evidence="34">
    <location>
        <position position="319"/>
    </location>
</feature>
<feature type="modified residue" description="N6-acetyllysine" evidence="34">
    <location>
        <position position="326"/>
    </location>
</feature>
<feature type="modified residue" description="Phosphoserine" evidence="35">
    <location>
        <position position="444"/>
    </location>
</feature>
<feature type="splice variant" id="VSP_045537" description="In isoform 2." evidence="15">
    <location>
        <begin position="60"/>
        <end position="89"/>
    </location>
</feature>
<feature type="sequence variant" id="VAR_052266" description="In dbSNP:rs2272428.">
    <original>I</original>
    <variation>V</variation>
    <location>
        <position position="112"/>
    </location>
</feature>
<feature type="sequence conflict" description="In Ref. 1; AAC50384." evidence="16" ref="1">
    <original>R</original>
    <variation>A</variation>
    <location>
        <position position="435"/>
    </location>
</feature>
<feature type="sequence conflict" description="In Ref. 3; BAH13897." evidence="16" ref="3">
    <original>K</original>
    <variation>R</variation>
    <location>
        <position position="531"/>
    </location>
</feature>
<feature type="helix" evidence="37">
    <location>
        <begin position="29"/>
        <end position="48"/>
    </location>
</feature>
<feature type="helix" evidence="37">
    <location>
        <begin position="49"/>
        <end position="51"/>
    </location>
</feature>
<feature type="strand" evidence="37">
    <location>
        <begin position="58"/>
        <end position="62"/>
    </location>
</feature>
<feature type="strand" evidence="38">
    <location>
        <begin position="64"/>
        <end position="66"/>
    </location>
</feature>
<feature type="strand" evidence="37">
    <location>
        <begin position="68"/>
        <end position="71"/>
    </location>
</feature>
<feature type="helix" evidence="37">
    <location>
        <begin position="74"/>
        <end position="80"/>
    </location>
</feature>
<feature type="helix" evidence="37">
    <location>
        <begin position="86"/>
        <end position="101"/>
    </location>
</feature>
<feature type="helix" evidence="37">
    <location>
        <begin position="108"/>
        <end position="126"/>
    </location>
</feature>
<feature type="helix" evidence="37">
    <location>
        <begin position="130"/>
        <end position="151"/>
    </location>
</feature>
<feature type="strand" evidence="39">
    <location>
        <begin position="152"/>
        <end position="154"/>
    </location>
</feature>
<feature type="helix" evidence="37">
    <location>
        <begin position="160"/>
        <end position="171"/>
    </location>
</feature>
<feature type="strand" evidence="40">
    <location>
        <begin position="172"/>
        <end position="175"/>
    </location>
</feature>
<feature type="turn" evidence="37">
    <location>
        <begin position="176"/>
        <end position="179"/>
    </location>
</feature>
<feature type="helix" evidence="37">
    <location>
        <begin position="180"/>
        <end position="193"/>
    </location>
</feature>
<feature type="turn" evidence="37">
    <location>
        <begin position="197"/>
        <end position="199"/>
    </location>
</feature>
<feature type="helix" evidence="37">
    <location>
        <begin position="205"/>
        <end position="207"/>
    </location>
</feature>
<feature type="strand" evidence="37">
    <location>
        <begin position="208"/>
        <end position="212"/>
    </location>
</feature>
<feature type="strand" evidence="39">
    <location>
        <begin position="214"/>
        <end position="216"/>
    </location>
</feature>
<feature type="helix" evidence="37">
    <location>
        <begin position="218"/>
        <end position="220"/>
    </location>
</feature>
<feature type="strand" evidence="37">
    <location>
        <begin position="222"/>
        <end position="229"/>
    </location>
</feature>
<feature type="strand" evidence="41">
    <location>
        <begin position="234"/>
        <end position="237"/>
    </location>
</feature>
<feature type="strand" evidence="37">
    <location>
        <begin position="240"/>
        <end position="249"/>
    </location>
</feature>
<feature type="strand" evidence="37">
    <location>
        <begin position="253"/>
        <end position="255"/>
    </location>
</feature>
<feature type="strand" evidence="39">
    <location>
        <begin position="259"/>
        <end position="261"/>
    </location>
</feature>
<feature type="strand" evidence="37">
    <location>
        <begin position="262"/>
        <end position="266"/>
    </location>
</feature>
<feature type="helix" evidence="37">
    <location>
        <begin position="269"/>
        <end position="291"/>
    </location>
</feature>
<feature type="turn" evidence="37">
    <location>
        <begin position="292"/>
        <end position="294"/>
    </location>
</feature>
<feature type="strand" evidence="37">
    <location>
        <begin position="297"/>
        <end position="301"/>
    </location>
</feature>
<feature type="strand" evidence="37">
    <location>
        <begin position="304"/>
        <end position="306"/>
    </location>
</feature>
<feature type="helix" evidence="37">
    <location>
        <begin position="311"/>
        <end position="319"/>
    </location>
</feature>
<feature type="strand" evidence="37">
    <location>
        <begin position="323"/>
        <end position="328"/>
    </location>
</feature>
<feature type="helix" evidence="41">
    <location>
        <begin position="330"/>
        <end position="332"/>
    </location>
</feature>
<feature type="helix" evidence="37">
    <location>
        <begin position="333"/>
        <end position="340"/>
    </location>
</feature>
<feature type="strand" evidence="37">
    <location>
        <begin position="344"/>
        <end position="347"/>
    </location>
</feature>
<feature type="helix" evidence="37">
    <location>
        <begin position="348"/>
        <end position="350"/>
    </location>
</feature>
<feature type="helix" evidence="37">
    <location>
        <begin position="353"/>
        <end position="355"/>
    </location>
</feature>
<feature type="strand" evidence="37">
    <location>
        <begin position="357"/>
        <end position="366"/>
    </location>
</feature>
<feature type="strand" evidence="42">
    <location>
        <begin position="368"/>
        <end position="370"/>
    </location>
</feature>
<feature type="strand" evidence="37">
    <location>
        <begin position="372"/>
        <end position="377"/>
    </location>
</feature>
<feature type="strand" evidence="43">
    <location>
        <begin position="379"/>
        <end position="381"/>
    </location>
</feature>
<feature type="strand" evidence="37">
    <location>
        <begin position="386"/>
        <end position="390"/>
    </location>
</feature>
<feature type="strand" evidence="37">
    <location>
        <begin position="392"/>
        <end position="394"/>
    </location>
</feature>
<feature type="helix" evidence="37">
    <location>
        <begin position="395"/>
        <end position="417"/>
    </location>
</feature>
<feature type="strand" evidence="37">
    <location>
        <begin position="420"/>
        <end position="423"/>
    </location>
</feature>
<feature type="helix" evidence="37">
    <location>
        <begin position="427"/>
        <end position="442"/>
    </location>
</feature>
<feature type="turn" evidence="40">
    <location>
        <begin position="444"/>
        <end position="446"/>
    </location>
</feature>
<feature type="helix" evidence="37">
    <location>
        <begin position="447"/>
        <end position="458"/>
    </location>
</feature>
<feature type="helix" evidence="37">
    <location>
        <begin position="460"/>
        <end position="469"/>
    </location>
</feature>
<feature type="helix" evidence="37">
    <location>
        <begin position="473"/>
        <end position="486"/>
    </location>
</feature>
<feature type="strand" evidence="37">
    <location>
        <begin position="491"/>
        <end position="494"/>
    </location>
</feature>
<feature type="turn" evidence="37">
    <location>
        <begin position="495"/>
        <end position="498"/>
    </location>
</feature>
<feature type="strand" evidence="37">
    <location>
        <begin position="499"/>
        <end position="502"/>
    </location>
</feature>
<feature type="turn" evidence="37">
    <location>
        <begin position="503"/>
        <end position="507"/>
    </location>
</feature>
<feature type="strand" evidence="37">
    <location>
        <begin position="509"/>
        <end position="511"/>
    </location>
</feature>
<feature type="helix" evidence="37">
    <location>
        <begin position="512"/>
        <end position="530"/>
    </location>
</feature>
<feature type="strand" evidence="37">
    <location>
        <begin position="532"/>
        <end position="535"/>
    </location>
</feature>
<protein>
    <recommendedName>
        <fullName>T-complex protein 1 subunit delta</fullName>
        <shortName>TCP-1-delta</shortName>
        <ecNumber evidence="8">3.6.1.-</ecNumber>
    </recommendedName>
    <alternativeName>
        <fullName>CCT-delta</fullName>
    </alternativeName>
    <alternativeName>
        <fullName>Chaperonin containing T-complex polypeptide 1 subunit 4</fullName>
    </alternativeName>
    <alternativeName>
        <fullName>Stimulator of TAR RNA-binding</fullName>
    </alternativeName>
</protein>
<accession>P50991</accession>
<accession>B2R6I3</accession>
<accession>B7Z8B1</accession>
<accession>F5H5W3</accession>
<accession>O14870</accession>
<accession>Q53QP9</accession>
<accession>Q96C51</accession>